<accession>Q1MAZ1</accession>
<sequence length="294" mass="32246">MPSLKDLKNRIASVKATQKITKAMKMVAAAKLRRAQEAAEAARPYSQRMGAVLANIAKAVTDADGAPTLMTGTGQDQVHLLVVCTAERGLCGGFNSQIARFAREHVRKLVAEGKTVKIFTVGKKGYDILRREFASLIIERKELRDVKRVGFENADQIGKRIIEMYAAGEFDVCTLFYSEFKSVISQIPTAQRLIPASAEAVQAEDAEHAGAVYEYEPDPASILEDLIPRNISVQIFRALLENVAGEMGAKMSAMDNATRNAGEMINKLTLSYNRQRQAQITKELIEIISGAEAL</sequence>
<protein>
    <recommendedName>
        <fullName evidence="1">ATP synthase gamma chain</fullName>
    </recommendedName>
    <alternativeName>
        <fullName evidence="1">ATP synthase F1 sector gamma subunit</fullName>
    </alternativeName>
    <alternativeName>
        <fullName evidence="1">F-ATPase gamma subunit</fullName>
    </alternativeName>
</protein>
<evidence type="ECO:0000255" key="1">
    <source>
        <dbReference type="HAMAP-Rule" id="MF_00815"/>
    </source>
</evidence>
<gene>
    <name evidence="1" type="primary">atpG</name>
    <name type="ordered locus">RL4408</name>
</gene>
<comment type="function">
    <text evidence="1">Produces ATP from ADP in the presence of a proton gradient across the membrane. The gamma chain is believed to be important in regulating ATPase activity and the flow of protons through the CF(0) complex.</text>
</comment>
<comment type="subunit">
    <text evidence="1">F-type ATPases have 2 components, CF(1) - the catalytic core - and CF(0) - the membrane proton channel. CF(1) has five subunits: alpha(3), beta(3), gamma(1), delta(1), epsilon(1). CF(0) has three main subunits: a, b and c.</text>
</comment>
<comment type="subcellular location">
    <subcellularLocation>
        <location evidence="1">Cell inner membrane</location>
        <topology evidence="1">Peripheral membrane protein</topology>
    </subcellularLocation>
</comment>
<comment type="similarity">
    <text evidence="1">Belongs to the ATPase gamma chain family.</text>
</comment>
<keyword id="KW-0066">ATP synthesis</keyword>
<keyword id="KW-0997">Cell inner membrane</keyword>
<keyword id="KW-1003">Cell membrane</keyword>
<keyword id="KW-0139">CF(1)</keyword>
<keyword id="KW-0375">Hydrogen ion transport</keyword>
<keyword id="KW-0406">Ion transport</keyword>
<keyword id="KW-0472">Membrane</keyword>
<keyword id="KW-0813">Transport</keyword>
<reference key="1">
    <citation type="journal article" date="2006" name="Genome Biol.">
        <title>The genome of Rhizobium leguminosarum has recognizable core and accessory components.</title>
        <authorList>
            <person name="Young J.P.W."/>
            <person name="Crossman L.C."/>
            <person name="Johnston A.W.B."/>
            <person name="Thomson N.R."/>
            <person name="Ghazoui Z.F."/>
            <person name="Hull K.H."/>
            <person name="Wexler M."/>
            <person name="Curson A.R.J."/>
            <person name="Todd J.D."/>
            <person name="Poole P.S."/>
            <person name="Mauchline T.H."/>
            <person name="East A.K."/>
            <person name="Quail M.A."/>
            <person name="Churcher C."/>
            <person name="Arrowsmith C."/>
            <person name="Cherevach I."/>
            <person name="Chillingworth T."/>
            <person name="Clarke K."/>
            <person name="Cronin A."/>
            <person name="Davis P."/>
            <person name="Fraser A."/>
            <person name="Hance Z."/>
            <person name="Hauser H."/>
            <person name="Jagels K."/>
            <person name="Moule S."/>
            <person name="Mungall K."/>
            <person name="Norbertczak H."/>
            <person name="Rabbinowitsch E."/>
            <person name="Sanders M."/>
            <person name="Simmonds M."/>
            <person name="Whitehead S."/>
            <person name="Parkhill J."/>
        </authorList>
    </citation>
    <scope>NUCLEOTIDE SEQUENCE [LARGE SCALE GENOMIC DNA]</scope>
    <source>
        <strain>DSM 114642 / LMG 32736 / 3841</strain>
    </source>
</reference>
<dbReference type="EMBL" id="AM236080">
    <property type="protein sequence ID" value="CAK09894.1"/>
    <property type="molecule type" value="Genomic_DNA"/>
</dbReference>
<dbReference type="RefSeq" id="WP_003543466.1">
    <property type="nucleotide sequence ID" value="NC_008380.1"/>
</dbReference>
<dbReference type="SMR" id="Q1MAZ1"/>
<dbReference type="EnsemblBacteria" id="CAK09894">
    <property type="protein sequence ID" value="CAK09894"/>
    <property type="gene ID" value="RL4408"/>
</dbReference>
<dbReference type="KEGG" id="rle:RL4408"/>
<dbReference type="eggNOG" id="COG0224">
    <property type="taxonomic scope" value="Bacteria"/>
</dbReference>
<dbReference type="HOGENOM" id="CLU_050669_0_1_5"/>
<dbReference type="Proteomes" id="UP000006575">
    <property type="component" value="Chromosome"/>
</dbReference>
<dbReference type="GO" id="GO:0005886">
    <property type="term" value="C:plasma membrane"/>
    <property type="evidence" value="ECO:0007669"/>
    <property type="project" value="UniProtKB-SubCell"/>
</dbReference>
<dbReference type="GO" id="GO:0045259">
    <property type="term" value="C:proton-transporting ATP synthase complex"/>
    <property type="evidence" value="ECO:0007669"/>
    <property type="project" value="UniProtKB-KW"/>
</dbReference>
<dbReference type="GO" id="GO:0005524">
    <property type="term" value="F:ATP binding"/>
    <property type="evidence" value="ECO:0007669"/>
    <property type="project" value="UniProtKB-UniRule"/>
</dbReference>
<dbReference type="GO" id="GO:0046933">
    <property type="term" value="F:proton-transporting ATP synthase activity, rotational mechanism"/>
    <property type="evidence" value="ECO:0007669"/>
    <property type="project" value="UniProtKB-UniRule"/>
</dbReference>
<dbReference type="GO" id="GO:0042777">
    <property type="term" value="P:proton motive force-driven plasma membrane ATP synthesis"/>
    <property type="evidence" value="ECO:0007669"/>
    <property type="project" value="UniProtKB-UniRule"/>
</dbReference>
<dbReference type="CDD" id="cd12151">
    <property type="entry name" value="F1-ATPase_gamma"/>
    <property type="match status" value="1"/>
</dbReference>
<dbReference type="FunFam" id="1.10.287.80:FF:000001">
    <property type="entry name" value="ATP synthase gamma chain"/>
    <property type="match status" value="1"/>
</dbReference>
<dbReference type="FunFam" id="1.10.287.80:FF:000003">
    <property type="entry name" value="ATP synthase gamma chain, chloroplastic"/>
    <property type="match status" value="1"/>
</dbReference>
<dbReference type="Gene3D" id="3.40.1380.10">
    <property type="match status" value="1"/>
</dbReference>
<dbReference type="Gene3D" id="1.10.287.80">
    <property type="entry name" value="ATP synthase, gamma subunit, helix hairpin domain"/>
    <property type="match status" value="1"/>
</dbReference>
<dbReference type="HAMAP" id="MF_00815">
    <property type="entry name" value="ATP_synth_gamma_bact"/>
    <property type="match status" value="1"/>
</dbReference>
<dbReference type="InterPro" id="IPR035968">
    <property type="entry name" value="ATP_synth_F1_ATPase_gsu"/>
</dbReference>
<dbReference type="InterPro" id="IPR000131">
    <property type="entry name" value="ATP_synth_F1_gsu"/>
</dbReference>
<dbReference type="InterPro" id="IPR023632">
    <property type="entry name" value="ATP_synth_F1_gsu_CS"/>
</dbReference>
<dbReference type="NCBIfam" id="TIGR01146">
    <property type="entry name" value="ATPsyn_F1gamma"/>
    <property type="match status" value="1"/>
</dbReference>
<dbReference type="NCBIfam" id="NF004146">
    <property type="entry name" value="PRK05621.1-4"/>
    <property type="match status" value="1"/>
</dbReference>
<dbReference type="PANTHER" id="PTHR11693">
    <property type="entry name" value="ATP SYNTHASE GAMMA CHAIN"/>
    <property type="match status" value="1"/>
</dbReference>
<dbReference type="PANTHER" id="PTHR11693:SF22">
    <property type="entry name" value="ATP SYNTHASE SUBUNIT GAMMA, MITOCHONDRIAL"/>
    <property type="match status" value="1"/>
</dbReference>
<dbReference type="Pfam" id="PF00231">
    <property type="entry name" value="ATP-synt"/>
    <property type="match status" value="1"/>
</dbReference>
<dbReference type="PIRSF" id="PIRSF039089">
    <property type="entry name" value="ATP_synthase_gamma"/>
    <property type="match status" value="1"/>
</dbReference>
<dbReference type="PRINTS" id="PR00126">
    <property type="entry name" value="ATPASEGAMMA"/>
</dbReference>
<dbReference type="SUPFAM" id="SSF52943">
    <property type="entry name" value="ATP synthase (F1-ATPase), gamma subunit"/>
    <property type="match status" value="1"/>
</dbReference>
<dbReference type="PROSITE" id="PS00153">
    <property type="entry name" value="ATPASE_GAMMA"/>
    <property type="match status" value="1"/>
</dbReference>
<feature type="chain" id="PRO_1000053302" description="ATP synthase gamma chain">
    <location>
        <begin position="1"/>
        <end position="294"/>
    </location>
</feature>
<name>ATPG_RHIJ3</name>
<organism>
    <name type="scientific">Rhizobium johnstonii (strain DSM 114642 / LMG 32736 / 3841)</name>
    <name type="common">Rhizobium leguminosarum bv. viciae</name>
    <dbReference type="NCBI Taxonomy" id="216596"/>
    <lineage>
        <taxon>Bacteria</taxon>
        <taxon>Pseudomonadati</taxon>
        <taxon>Pseudomonadota</taxon>
        <taxon>Alphaproteobacteria</taxon>
        <taxon>Hyphomicrobiales</taxon>
        <taxon>Rhizobiaceae</taxon>
        <taxon>Rhizobium/Agrobacterium group</taxon>
        <taxon>Rhizobium</taxon>
        <taxon>Rhizobium johnstonii</taxon>
    </lineage>
</organism>
<proteinExistence type="inferred from homology"/>